<feature type="chain" id="PRO_1000188067" description="Small ribosomal subunit biogenesis GTPase RsgA">
    <location>
        <begin position="1"/>
        <end position="350"/>
    </location>
</feature>
<feature type="domain" description="CP-type G" evidence="2">
    <location>
        <begin position="104"/>
        <end position="273"/>
    </location>
</feature>
<feature type="region of interest" description="Disordered" evidence="3">
    <location>
        <begin position="1"/>
        <end position="33"/>
    </location>
</feature>
<feature type="compositionally biased region" description="Polar residues" evidence="3">
    <location>
        <begin position="1"/>
        <end position="17"/>
    </location>
</feature>
<feature type="binding site" evidence="1">
    <location>
        <begin position="160"/>
        <end position="163"/>
    </location>
    <ligand>
        <name>GTP</name>
        <dbReference type="ChEBI" id="CHEBI:37565"/>
    </ligand>
</feature>
<feature type="binding site" evidence="1">
    <location>
        <begin position="214"/>
        <end position="222"/>
    </location>
    <ligand>
        <name>GTP</name>
        <dbReference type="ChEBI" id="CHEBI:37565"/>
    </ligand>
</feature>
<feature type="binding site" evidence="1">
    <location>
        <position position="297"/>
    </location>
    <ligand>
        <name>Zn(2+)</name>
        <dbReference type="ChEBI" id="CHEBI:29105"/>
    </ligand>
</feature>
<feature type="binding site" evidence="1">
    <location>
        <position position="302"/>
    </location>
    <ligand>
        <name>Zn(2+)</name>
        <dbReference type="ChEBI" id="CHEBI:29105"/>
    </ligand>
</feature>
<feature type="binding site" evidence="1">
    <location>
        <position position="304"/>
    </location>
    <ligand>
        <name>Zn(2+)</name>
        <dbReference type="ChEBI" id="CHEBI:29105"/>
    </ligand>
</feature>
<feature type="binding site" evidence="1">
    <location>
        <position position="310"/>
    </location>
    <ligand>
        <name>Zn(2+)</name>
        <dbReference type="ChEBI" id="CHEBI:29105"/>
    </ligand>
</feature>
<organism>
    <name type="scientific">Escherichia coli O81 (strain ED1a)</name>
    <dbReference type="NCBI Taxonomy" id="585397"/>
    <lineage>
        <taxon>Bacteria</taxon>
        <taxon>Pseudomonadati</taxon>
        <taxon>Pseudomonadota</taxon>
        <taxon>Gammaproteobacteria</taxon>
        <taxon>Enterobacterales</taxon>
        <taxon>Enterobacteriaceae</taxon>
        <taxon>Escherichia</taxon>
    </lineage>
</organism>
<dbReference type="EC" id="3.6.1.-" evidence="1"/>
<dbReference type="EMBL" id="CU928162">
    <property type="protein sequence ID" value="CAR11051.2"/>
    <property type="molecule type" value="Genomic_DNA"/>
</dbReference>
<dbReference type="RefSeq" id="WP_000041976.1">
    <property type="nucleotide sequence ID" value="NC_011745.1"/>
</dbReference>
<dbReference type="SMR" id="B7MSX6"/>
<dbReference type="KEGG" id="ecq:ECED1_4948"/>
<dbReference type="HOGENOM" id="CLU_033617_2_0_6"/>
<dbReference type="Proteomes" id="UP000000748">
    <property type="component" value="Chromosome"/>
</dbReference>
<dbReference type="GO" id="GO:0005737">
    <property type="term" value="C:cytoplasm"/>
    <property type="evidence" value="ECO:0007669"/>
    <property type="project" value="UniProtKB-SubCell"/>
</dbReference>
<dbReference type="GO" id="GO:0005525">
    <property type="term" value="F:GTP binding"/>
    <property type="evidence" value="ECO:0007669"/>
    <property type="project" value="UniProtKB-UniRule"/>
</dbReference>
<dbReference type="GO" id="GO:0003924">
    <property type="term" value="F:GTPase activity"/>
    <property type="evidence" value="ECO:0007669"/>
    <property type="project" value="UniProtKB-UniRule"/>
</dbReference>
<dbReference type="GO" id="GO:0046872">
    <property type="term" value="F:metal ion binding"/>
    <property type="evidence" value="ECO:0007669"/>
    <property type="project" value="UniProtKB-KW"/>
</dbReference>
<dbReference type="GO" id="GO:0019843">
    <property type="term" value="F:rRNA binding"/>
    <property type="evidence" value="ECO:0007669"/>
    <property type="project" value="UniProtKB-KW"/>
</dbReference>
<dbReference type="GO" id="GO:0042274">
    <property type="term" value="P:ribosomal small subunit biogenesis"/>
    <property type="evidence" value="ECO:0007669"/>
    <property type="project" value="UniProtKB-UniRule"/>
</dbReference>
<dbReference type="CDD" id="cd01854">
    <property type="entry name" value="YjeQ_EngC"/>
    <property type="match status" value="1"/>
</dbReference>
<dbReference type="FunFam" id="1.10.40.50:FF:000001">
    <property type="entry name" value="Small ribosomal subunit biogenesis GTPase RsgA"/>
    <property type="match status" value="1"/>
</dbReference>
<dbReference type="FunFam" id="2.40.50.140:FF:000122">
    <property type="entry name" value="Small ribosomal subunit biogenesis GTPase RsgA"/>
    <property type="match status" value="1"/>
</dbReference>
<dbReference type="FunFam" id="3.40.50.300:FF:000389">
    <property type="entry name" value="Small ribosomal subunit biogenesis GTPase RsgA"/>
    <property type="match status" value="1"/>
</dbReference>
<dbReference type="Gene3D" id="2.40.50.140">
    <property type="entry name" value="Nucleic acid-binding proteins"/>
    <property type="match status" value="1"/>
</dbReference>
<dbReference type="Gene3D" id="3.40.50.300">
    <property type="entry name" value="P-loop containing nucleotide triphosphate hydrolases"/>
    <property type="match status" value="1"/>
</dbReference>
<dbReference type="Gene3D" id="1.10.40.50">
    <property type="entry name" value="Probable gtpase engc, domain 3"/>
    <property type="match status" value="1"/>
</dbReference>
<dbReference type="HAMAP" id="MF_01820">
    <property type="entry name" value="GTPase_RsgA"/>
    <property type="match status" value="1"/>
</dbReference>
<dbReference type="InterPro" id="IPR030378">
    <property type="entry name" value="G_CP_dom"/>
</dbReference>
<dbReference type="InterPro" id="IPR012340">
    <property type="entry name" value="NA-bd_OB-fold"/>
</dbReference>
<dbReference type="InterPro" id="IPR027417">
    <property type="entry name" value="P-loop_NTPase"/>
</dbReference>
<dbReference type="InterPro" id="IPR004881">
    <property type="entry name" value="Ribosome_biogen_GTPase_RsgA"/>
</dbReference>
<dbReference type="InterPro" id="IPR010914">
    <property type="entry name" value="RsgA_GTPase_dom"/>
</dbReference>
<dbReference type="NCBIfam" id="NF008931">
    <property type="entry name" value="PRK12288.1"/>
    <property type="match status" value="1"/>
</dbReference>
<dbReference type="NCBIfam" id="TIGR00157">
    <property type="entry name" value="ribosome small subunit-dependent GTPase A"/>
    <property type="match status" value="1"/>
</dbReference>
<dbReference type="PANTHER" id="PTHR32120">
    <property type="entry name" value="SMALL RIBOSOMAL SUBUNIT BIOGENESIS GTPASE RSGA"/>
    <property type="match status" value="1"/>
</dbReference>
<dbReference type="PANTHER" id="PTHR32120:SF11">
    <property type="entry name" value="SMALL RIBOSOMAL SUBUNIT BIOGENESIS GTPASE RSGA 1, MITOCHONDRIAL-RELATED"/>
    <property type="match status" value="1"/>
</dbReference>
<dbReference type="Pfam" id="PF03193">
    <property type="entry name" value="RsgA_GTPase"/>
    <property type="match status" value="1"/>
</dbReference>
<dbReference type="SUPFAM" id="SSF52540">
    <property type="entry name" value="P-loop containing nucleoside triphosphate hydrolases"/>
    <property type="match status" value="1"/>
</dbReference>
<dbReference type="PROSITE" id="PS50936">
    <property type="entry name" value="ENGC_GTPASE"/>
    <property type="match status" value="1"/>
</dbReference>
<dbReference type="PROSITE" id="PS51721">
    <property type="entry name" value="G_CP"/>
    <property type="match status" value="1"/>
</dbReference>
<comment type="function">
    <text evidence="1">One of several proteins that assist in the late maturation steps of the functional core of the 30S ribosomal subunit. Helps release RbfA from mature subunits. May play a role in the assembly of ribosomal proteins into the subunit. Circularly permuted GTPase that catalyzes slow GTP hydrolysis, GTPase activity is stimulated by the 30S ribosomal subunit.</text>
</comment>
<comment type="cofactor">
    <cofactor evidence="1">
        <name>Zn(2+)</name>
        <dbReference type="ChEBI" id="CHEBI:29105"/>
    </cofactor>
    <text evidence="1">Binds 1 zinc ion per subunit.</text>
</comment>
<comment type="subunit">
    <text evidence="1">Monomer. Associates with 30S ribosomal subunit, binds 16S rRNA.</text>
</comment>
<comment type="subcellular location">
    <subcellularLocation>
        <location evidence="1">Cytoplasm</location>
    </subcellularLocation>
</comment>
<comment type="similarity">
    <text evidence="1">Belongs to the TRAFAC class YlqF/YawG GTPase family. RsgA subfamily.</text>
</comment>
<gene>
    <name evidence="1" type="primary">rsgA</name>
    <name type="ordered locus">ECED1_4948</name>
</gene>
<sequence length="350" mass="39237">MSKNKLSKGQQRRVNANHQRRLKTSKEKPDYDDNLFGEPDEGIVISRFGMHADVESADGDVHRCNIRRTIRSLVTGDRVVWRPGKPAAEGVNVKGIVEAVHERTSVLTRPDFYDGVKPIAANIDQIVIVSAILPELSLNIIDRYLVACETLQIEPIIVLNKIDLLDDEGMEFVNEQMDIYRNIGYRVLMVSSHTQDGLKPLEEALTGRISIFAGQSGVGKSSLLNALLGLQKEILTNDVSDNSGLGQHTTTAARLYHFPHGGDVIDSPGVREFGLWHLEPEQITQGFVEFHDYLGLCKYRDCKHDTDPGCAIREAVEEGKIAETRFENYHRILESMAQVKTRKNFSDTDD</sequence>
<proteinExistence type="inferred from homology"/>
<accession>B7MSX6</accession>
<protein>
    <recommendedName>
        <fullName evidence="1">Small ribosomal subunit biogenesis GTPase RsgA</fullName>
        <ecNumber evidence="1">3.6.1.-</ecNumber>
    </recommendedName>
</protein>
<keyword id="KW-0963">Cytoplasm</keyword>
<keyword id="KW-0342">GTP-binding</keyword>
<keyword id="KW-0378">Hydrolase</keyword>
<keyword id="KW-0479">Metal-binding</keyword>
<keyword id="KW-0547">Nucleotide-binding</keyword>
<keyword id="KW-0690">Ribosome biogenesis</keyword>
<keyword id="KW-0694">RNA-binding</keyword>
<keyword id="KW-0699">rRNA-binding</keyword>
<keyword id="KW-0862">Zinc</keyword>
<evidence type="ECO:0000255" key="1">
    <source>
        <dbReference type="HAMAP-Rule" id="MF_01820"/>
    </source>
</evidence>
<evidence type="ECO:0000255" key="2">
    <source>
        <dbReference type="PROSITE-ProRule" id="PRU01058"/>
    </source>
</evidence>
<evidence type="ECO:0000256" key="3">
    <source>
        <dbReference type="SAM" id="MobiDB-lite"/>
    </source>
</evidence>
<name>RSGA_ECO81</name>
<reference key="1">
    <citation type="journal article" date="2009" name="PLoS Genet.">
        <title>Organised genome dynamics in the Escherichia coli species results in highly diverse adaptive paths.</title>
        <authorList>
            <person name="Touchon M."/>
            <person name="Hoede C."/>
            <person name="Tenaillon O."/>
            <person name="Barbe V."/>
            <person name="Baeriswyl S."/>
            <person name="Bidet P."/>
            <person name="Bingen E."/>
            <person name="Bonacorsi S."/>
            <person name="Bouchier C."/>
            <person name="Bouvet O."/>
            <person name="Calteau A."/>
            <person name="Chiapello H."/>
            <person name="Clermont O."/>
            <person name="Cruveiller S."/>
            <person name="Danchin A."/>
            <person name="Diard M."/>
            <person name="Dossat C."/>
            <person name="Karoui M.E."/>
            <person name="Frapy E."/>
            <person name="Garry L."/>
            <person name="Ghigo J.M."/>
            <person name="Gilles A.M."/>
            <person name="Johnson J."/>
            <person name="Le Bouguenec C."/>
            <person name="Lescat M."/>
            <person name="Mangenot S."/>
            <person name="Martinez-Jehanne V."/>
            <person name="Matic I."/>
            <person name="Nassif X."/>
            <person name="Oztas S."/>
            <person name="Petit M.A."/>
            <person name="Pichon C."/>
            <person name="Rouy Z."/>
            <person name="Ruf C.S."/>
            <person name="Schneider D."/>
            <person name="Tourret J."/>
            <person name="Vacherie B."/>
            <person name="Vallenet D."/>
            <person name="Medigue C."/>
            <person name="Rocha E.P.C."/>
            <person name="Denamur E."/>
        </authorList>
    </citation>
    <scope>NUCLEOTIDE SEQUENCE [LARGE SCALE GENOMIC DNA]</scope>
    <source>
        <strain>ED1a</strain>
    </source>
</reference>